<dbReference type="EC" id="2.4.2.18" evidence="1"/>
<dbReference type="EMBL" id="CP000248">
    <property type="protein sequence ID" value="ABD26462.1"/>
    <property type="molecule type" value="Genomic_DNA"/>
</dbReference>
<dbReference type="RefSeq" id="WP_011445671.1">
    <property type="nucleotide sequence ID" value="NC_007794.1"/>
</dbReference>
<dbReference type="SMR" id="Q2G6R1"/>
<dbReference type="STRING" id="279238.Saro_2023"/>
<dbReference type="KEGG" id="nar:Saro_2023"/>
<dbReference type="eggNOG" id="COG0547">
    <property type="taxonomic scope" value="Bacteria"/>
</dbReference>
<dbReference type="HOGENOM" id="CLU_034315_2_1_5"/>
<dbReference type="UniPathway" id="UPA00035">
    <property type="reaction ID" value="UER00041"/>
</dbReference>
<dbReference type="Proteomes" id="UP000009134">
    <property type="component" value="Chromosome"/>
</dbReference>
<dbReference type="GO" id="GO:0005829">
    <property type="term" value="C:cytosol"/>
    <property type="evidence" value="ECO:0007669"/>
    <property type="project" value="TreeGrafter"/>
</dbReference>
<dbReference type="GO" id="GO:0004048">
    <property type="term" value="F:anthranilate phosphoribosyltransferase activity"/>
    <property type="evidence" value="ECO:0007669"/>
    <property type="project" value="UniProtKB-UniRule"/>
</dbReference>
<dbReference type="GO" id="GO:0000287">
    <property type="term" value="F:magnesium ion binding"/>
    <property type="evidence" value="ECO:0007669"/>
    <property type="project" value="UniProtKB-UniRule"/>
</dbReference>
<dbReference type="GO" id="GO:0000162">
    <property type="term" value="P:L-tryptophan biosynthetic process"/>
    <property type="evidence" value="ECO:0007669"/>
    <property type="project" value="UniProtKB-UniRule"/>
</dbReference>
<dbReference type="FunFam" id="3.40.1030.10:FF:000002">
    <property type="entry name" value="Anthranilate phosphoribosyltransferase"/>
    <property type="match status" value="1"/>
</dbReference>
<dbReference type="Gene3D" id="3.40.1030.10">
    <property type="entry name" value="Nucleoside phosphorylase/phosphoribosyltransferase catalytic domain"/>
    <property type="match status" value="1"/>
</dbReference>
<dbReference type="Gene3D" id="1.20.970.10">
    <property type="entry name" value="Transferase, Pyrimidine Nucleoside Phosphorylase, Chain C"/>
    <property type="match status" value="1"/>
</dbReference>
<dbReference type="HAMAP" id="MF_00211">
    <property type="entry name" value="TrpD"/>
    <property type="match status" value="1"/>
</dbReference>
<dbReference type="InterPro" id="IPR005940">
    <property type="entry name" value="Anthranilate_Pribosyl_Tfrase"/>
</dbReference>
<dbReference type="InterPro" id="IPR000312">
    <property type="entry name" value="Glycosyl_Trfase_fam3"/>
</dbReference>
<dbReference type="InterPro" id="IPR017459">
    <property type="entry name" value="Glycosyl_Trfase_fam3_N_dom"/>
</dbReference>
<dbReference type="InterPro" id="IPR036320">
    <property type="entry name" value="Glycosyl_Trfase_fam3_N_dom_sf"/>
</dbReference>
<dbReference type="InterPro" id="IPR035902">
    <property type="entry name" value="Nuc_phospho_transferase"/>
</dbReference>
<dbReference type="NCBIfam" id="TIGR01245">
    <property type="entry name" value="trpD"/>
    <property type="match status" value="1"/>
</dbReference>
<dbReference type="PANTHER" id="PTHR43285">
    <property type="entry name" value="ANTHRANILATE PHOSPHORIBOSYLTRANSFERASE"/>
    <property type="match status" value="1"/>
</dbReference>
<dbReference type="PANTHER" id="PTHR43285:SF2">
    <property type="entry name" value="ANTHRANILATE PHOSPHORIBOSYLTRANSFERASE"/>
    <property type="match status" value="1"/>
</dbReference>
<dbReference type="Pfam" id="PF02885">
    <property type="entry name" value="Glycos_trans_3N"/>
    <property type="match status" value="1"/>
</dbReference>
<dbReference type="Pfam" id="PF00591">
    <property type="entry name" value="Glycos_transf_3"/>
    <property type="match status" value="1"/>
</dbReference>
<dbReference type="SUPFAM" id="SSF52418">
    <property type="entry name" value="Nucleoside phosphorylase/phosphoribosyltransferase catalytic domain"/>
    <property type="match status" value="1"/>
</dbReference>
<dbReference type="SUPFAM" id="SSF47648">
    <property type="entry name" value="Nucleoside phosphorylase/phosphoribosyltransferase N-terminal domain"/>
    <property type="match status" value="1"/>
</dbReference>
<gene>
    <name evidence="1" type="primary">trpD</name>
    <name type="ordered locus">Saro_2023</name>
</gene>
<comment type="function">
    <text evidence="1">Catalyzes the transfer of the phosphoribosyl group of 5-phosphorylribose-1-pyrophosphate (PRPP) to anthranilate to yield N-(5'-phosphoribosyl)-anthranilate (PRA).</text>
</comment>
<comment type="catalytic activity">
    <reaction evidence="1">
        <text>N-(5-phospho-beta-D-ribosyl)anthranilate + diphosphate = 5-phospho-alpha-D-ribose 1-diphosphate + anthranilate</text>
        <dbReference type="Rhea" id="RHEA:11768"/>
        <dbReference type="ChEBI" id="CHEBI:16567"/>
        <dbReference type="ChEBI" id="CHEBI:18277"/>
        <dbReference type="ChEBI" id="CHEBI:33019"/>
        <dbReference type="ChEBI" id="CHEBI:58017"/>
        <dbReference type="EC" id="2.4.2.18"/>
    </reaction>
</comment>
<comment type="cofactor">
    <cofactor evidence="1">
        <name>Mg(2+)</name>
        <dbReference type="ChEBI" id="CHEBI:18420"/>
    </cofactor>
    <text evidence="1">Binds 2 magnesium ions per monomer.</text>
</comment>
<comment type="pathway">
    <text evidence="1">Amino-acid biosynthesis; L-tryptophan biosynthesis; L-tryptophan from chorismate: step 2/5.</text>
</comment>
<comment type="subunit">
    <text evidence="1">Homodimer.</text>
</comment>
<comment type="similarity">
    <text evidence="1">Belongs to the anthranilate phosphoribosyltransferase family.</text>
</comment>
<evidence type="ECO:0000255" key="1">
    <source>
        <dbReference type="HAMAP-Rule" id="MF_00211"/>
    </source>
</evidence>
<organism>
    <name type="scientific">Novosphingobium aromaticivorans (strain ATCC 700278 / DSM 12444 / CCUG 56034 / CIP 105152 / NBRC 16084 / F199)</name>
    <dbReference type="NCBI Taxonomy" id="279238"/>
    <lineage>
        <taxon>Bacteria</taxon>
        <taxon>Pseudomonadati</taxon>
        <taxon>Pseudomonadota</taxon>
        <taxon>Alphaproteobacteria</taxon>
        <taxon>Sphingomonadales</taxon>
        <taxon>Sphingomonadaceae</taxon>
        <taxon>Novosphingobium</taxon>
    </lineage>
</organism>
<feature type="chain" id="PRO_0000325445" description="Anthranilate phosphoribosyltransferase">
    <location>
        <begin position="1"/>
        <end position="330"/>
    </location>
</feature>
<feature type="binding site" evidence="1">
    <location>
        <position position="75"/>
    </location>
    <ligand>
        <name>5-phospho-alpha-D-ribose 1-diphosphate</name>
        <dbReference type="ChEBI" id="CHEBI:58017"/>
    </ligand>
</feature>
<feature type="binding site" evidence="1">
    <location>
        <position position="75"/>
    </location>
    <ligand>
        <name>anthranilate</name>
        <dbReference type="ChEBI" id="CHEBI:16567"/>
        <label>1</label>
    </ligand>
</feature>
<feature type="binding site" evidence="1">
    <location>
        <begin position="78"/>
        <end position="79"/>
    </location>
    <ligand>
        <name>5-phospho-alpha-D-ribose 1-diphosphate</name>
        <dbReference type="ChEBI" id="CHEBI:58017"/>
    </ligand>
</feature>
<feature type="binding site" evidence="1">
    <location>
        <position position="83"/>
    </location>
    <ligand>
        <name>5-phospho-alpha-D-ribose 1-diphosphate</name>
        <dbReference type="ChEBI" id="CHEBI:58017"/>
    </ligand>
</feature>
<feature type="binding site" evidence="1">
    <location>
        <begin position="85"/>
        <end position="88"/>
    </location>
    <ligand>
        <name>5-phospho-alpha-D-ribose 1-diphosphate</name>
        <dbReference type="ChEBI" id="CHEBI:58017"/>
    </ligand>
</feature>
<feature type="binding site" evidence="1">
    <location>
        <position position="87"/>
    </location>
    <ligand>
        <name>Mg(2+)</name>
        <dbReference type="ChEBI" id="CHEBI:18420"/>
        <label>1</label>
    </ligand>
</feature>
<feature type="binding site" evidence="1">
    <location>
        <begin position="103"/>
        <end position="111"/>
    </location>
    <ligand>
        <name>5-phospho-alpha-D-ribose 1-diphosphate</name>
        <dbReference type="ChEBI" id="CHEBI:58017"/>
    </ligand>
</feature>
<feature type="binding site" evidence="1">
    <location>
        <position position="106"/>
    </location>
    <ligand>
        <name>anthranilate</name>
        <dbReference type="ChEBI" id="CHEBI:16567"/>
        <label>1</label>
    </ligand>
</feature>
<feature type="binding site" evidence="1">
    <location>
        <position position="115"/>
    </location>
    <ligand>
        <name>5-phospho-alpha-D-ribose 1-diphosphate</name>
        <dbReference type="ChEBI" id="CHEBI:58017"/>
    </ligand>
</feature>
<feature type="binding site" evidence="1">
    <location>
        <position position="161"/>
    </location>
    <ligand>
        <name>anthranilate</name>
        <dbReference type="ChEBI" id="CHEBI:16567"/>
        <label>2</label>
    </ligand>
</feature>
<feature type="binding site" evidence="1">
    <location>
        <position position="220"/>
    </location>
    <ligand>
        <name>Mg(2+)</name>
        <dbReference type="ChEBI" id="CHEBI:18420"/>
        <label>2</label>
    </ligand>
</feature>
<feature type="binding site" evidence="1">
    <location>
        <position position="221"/>
    </location>
    <ligand>
        <name>Mg(2+)</name>
        <dbReference type="ChEBI" id="CHEBI:18420"/>
        <label>1</label>
    </ligand>
</feature>
<feature type="binding site" evidence="1">
    <location>
        <position position="221"/>
    </location>
    <ligand>
        <name>Mg(2+)</name>
        <dbReference type="ChEBI" id="CHEBI:18420"/>
        <label>2</label>
    </ligand>
</feature>
<keyword id="KW-0028">Amino-acid biosynthesis</keyword>
<keyword id="KW-0057">Aromatic amino acid biosynthesis</keyword>
<keyword id="KW-0328">Glycosyltransferase</keyword>
<keyword id="KW-0460">Magnesium</keyword>
<keyword id="KW-0479">Metal-binding</keyword>
<keyword id="KW-1185">Reference proteome</keyword>
<keyword id="KW-0808">Transferase</keyword>
<keyword id="KW-0822">Tryptophan biosynthesis</keyword>
<accession>Q2G6R1</accession>
<sequence>MTLLPDPQHPLEEAEAEAAFAAILDGAVADEAIARFLVGLSDRGENASEIAGAARAMRARMIPIKAPANAIDVCGTGGDGHHTLNVSTAVSLVVAACGVPVAKHGNRAASSKAGAADTLEALGLNLDRAAETAEETLADLGICFLFAARHHPSMGRIMPIRKALGRRTIFNLMGPLANPANVRRQLVGIARPAYVPIYAEAILRLGTDHSFVISGDEGLDELSLAGGNELAEVRDGEISMRRVTPADAGLPESAVTAIRGGDAAHNARALRALLEGEHGPYRNAVLFNAAAALIIAGEAQDWHEGVEEAAEAIDKGLANALLNCWIAALE</sequence>
<reference key="1">
    <citation type="submission" date="2006-01" db="EMBL/GenBank/DDBJ databases">
        <title>Complete sequence of Novosphingobium aromaticivorans DSM 12444.</title>
        <authorList>
            <consortium name="US DOE Joint Genome Institute"/>
            <person name="Copeland A."/>
            <person name="Lucas S."/>
            <person name="Lapidus A."/>
            <person name="Barry K."/>
            <person name="Detter J.C."/>
            <person name="Glavina T."/>
            <person name="Hammon N."/>
            <person name="Israni S."/>
            <person name="Pitluck S."/>
            <person name="Chain P."/>
            <person name="Malfatti S."/>
            <person name="Shin M."/>
            <person name="Vergez L."/>
            <person name="Schmutz J."/>
            <person name="Larimer F."/>
            <person name="Land M."/>
            <person name="Kyrpides N."/>
            <person name="Ivanova N."/>
            <person name="Fredrickson J."/>
            <person name="Balkwill D."/>
            <person name="Romine M.F."/>
            <person name="Richardson P."/>
        </authorList>
    </citation>
    <scope>NUCLEOTIDE SEQUENCE [LARGE SCALE GENOMIC DNA]</scope>
    <source>
        <strain>ATCC 700278 / DSM 12444 / CCUG 56034 / CIP 105152 / NBRC 16084 / F199</strain>
    </source>
</reference>
<proteinExistence type="inferred from homology"/>
<protein>
    <recommendedName>
        <fullName evidence="1">Anthranilate phosphoribosyltransferase</fullName>
        <ecNumber evidence="1">2.4.2.18</ecNumber>
    </recommendedName>
</protein>
<name>TRPD_NOVAD</name>